<comment type="function">
    <text>Component of the core of the flagella.</text>
</comment>
<comment type="subunit">
    <text>The flagellum consists of an outer layer composed of repeating units of FlaA around a core that contains one or all of five antigenically related polypeptides.</text>
</comment>
<comment type="subcellular location">
    <subcellularLocation>
        <location>Periplasmic flagellum</location>
    </subcellularLocation>
    <subcellularLocation>
        <location>Periplasm</location>
    </subcellularLocation>
</comment>
<comment type="similarity">
    <text evidence="1">Belongs to the bacterial flagellin family.</text>
</comment>
<sequence>MIINHNMSAINAQXVQGBVT</sequence>
<feature type="chain" id="PRO_0000182629" description="Flagellar filament 33 kDa core protein">
    <location>
        <begin position="1"/>
        <end position="20" status="greater than"/>
    </location>
</feature>
<feature type="non-terminal residue">
    <location>
        <position position="20"/>
    </location>
</feature>
<evidence type="ECO:0000305" key="1"/>
<organism>
    <name type="scientific">Spirochaeta aurantia</name>
    <dbReference type="NCBI Taxonomy" id="147"/>
    <lineage>
        <taxon>Bacteria</taxon>
        <taxon>Pseudomonadati</taxon>
        <taxon>Spirochaetota</taxon>
        <taxon>Spirochaetia</taxon>
        <taxon>Spirochaetales</taxon>
        <taxon>Spirochaetaceae</taxon>
        <taxon>Spirochaeta</taxon>
    </lineage>
</organism>
<proteinExistence type="evidence at protein level"/>
<name>FLA2_SPIAU</name>
<dbReference type="GO" id="GO:0055040">
    <property type="term" value="C:periplasmic flagellum"/>
    <property type="evidence" value="ECO:0007669"/>
    <property type="project" value="UniProtKB-SubCell"/>
</dbReference>
<keyword id="KW-0975">Bacterial flagellum</keyword>
<keyword id="KW-0903">Direct protein sequencing</keyword>
<keyword id="KW-0574">Periplasm</keyword>
<accession>P21985</accession>
<protein>
    <recommendedName>
        <fullName>Flagellar filament 33 kDa core protein</fullName>
    </recommendedName>
    <alternativeName>
        <fullName>33 kDa minor core flagellin</fullName>
    </alternativeName>
</protein>
<reference key="1">
    <citation type="journal article" date="1991" name="J. Bacteriol.">
        <title>N-terminal amino acid sequences and amino acid compositions of the Spirochaeta aurantia flagellar filament polypeptides.</title>
        <authorList>
            <person name="Parales J. Jr."/>
            <person name="Greenberg E.P."/>
        </authorList>
    </citation>
    <scope>PROTEIN SEQUENCE</scope>
    <source>
        <strain>M1</strain>
    </source>
</reference>